<protein>
    <recommendedName>
        <fullName evidence="1">UPF0250 protein Pmen_3793</fullName>
    </recommendedName>
</protein>
<evidence type="ECO:0000255" key="1">
    <source>
        <dbReference type="HAMAP-Rule" id="MF_00659"/>
    </source>
</evidence>
<accession>A4XYX5</accession>
<reference key="1">
    <citation type="submission" date="2007-04" db="EMBL/GenBank/DDBJ databases">
        <title>Complete sequence of Pseudomonas mendocina ymp.</title>
        <authorList>
            <consortium name="US DOE Joint Genome Institute"/>
            <person name="Copeland A."/>
            <person name="Lucas S."/>
            <person name="Lapidus A."/>
            <person name="Barry K."/>
            <person name="Glavina del Rio T."/>
            <person name="Dalin E."/>
            <person name="Tice H."/>
            <person name="Pitluck S."/>
            <person name="Kiss H."/>
            <person name="Brettin T."/>
            <person name="Detter J.C."/>
            <person name="Bruce D."/>
            <person name="Han C."/>
            <person name="Schmutz J."/>
            <person name="Larimer F."/>
            <person name="Land M."/>
            <person name="Hauser L."/>
            <person name="Kyrpides N."/>
            <person name="Mikhailova N."/>
            <person name="Hersman L."/>
            <person name="Dubois J."/>
            <person name="Maurice P."/>
            <person name="Richardson P."/>
        </authorList>
    </citation>
    <scope>NUCLEOTIDE SEQUENCE [LARGE SCALE GENOMIC DNA]</scope>
    <source>
        <strain>ymp</strain>
    </source>
</reference>
<sequence length="92" mass="10159">MTDSDVQPPKIEFPCERYPIKVIGTAGEGFSDLVIEVIQRHAPDLDASTLVMRDSRNGNFLSVQVLITATSVEQLQAIHVDLRATGRVHMVL</sequence>
<name>Y3793_ECTM1</name>
<proteinExistence type="inferred from homology"/>
<dbReference type="EMBL" id="CP000680">
    <property type="protein sequence ID" value="ABP86541.1"/>
    <property type="molecule type" value="Genomic_DNA"/>
</dbReference>
<dbReference type="SMR" id="A4XYX5"/>
<dbReference type="STRING" id="399739.Pmen_3793"/>
<dbReference type="KEGG" id="pmy:Pmen_3793"/>
<dbReference type="PATRIC" id="fig|399739.8.peg.3846"/>
<dbReference type="eggNOG" id="COG2921">
    <property type="taxonomic scope" value="Bacteria"/>
</dbReference>
<dbReference type="HOGENOM" id="CLU_161438_1_0_6"/>
<dbReference type="OrthoDB" id="9793424at2"/>
<dbReference type="GO" id="GO:0005829">
    <property type="term" value="C:cytosol"/>
    <property type="evidence" value="ECO:0007669"/>
    <property type="project" value="TreeGrafter"/>
</dbReference>
<dbReference type="Gene3D" id="3.30.70.260">
    <property type="match status" value="1"/>
</dbReference>
<dbReference type="HAMAP" id="MF_00659">
    <property type="entry name" value="UPF0250"/>
    <property type="match status" value="1"/>
</dbReference>
<dbReference type="InterPro" id="IPR007454">
    <property type="entry name" value="UPF0250_YbeD-like"/>
</dbReference>
<dbReference type="InterPro" id="IPR027471">
    <property type="entry name" value="YbeD-like_sf"/>
</dbReference>
<dbReference type="NCBIfam" id="NF001486">
    <property type="entry name" value="PRK00341.1"/>
    <property type="match status" value="1"/>
</dbReference>
<dbReference type="PANTHER" id="PTHR38036">
    <property type="entry name" value="UPF0250 PROTEIN YBED"/>
    <property type="match status" value="1"/>
</dbReference>
<dbReference type="PANTHER" id="PTHR38036:SF1">
    <property type="entry name" value="UPF0250 PROTEIN YBED"/>
    <property type="match status" value="1"/>
</dbReference>
<dbReference type="Pfam" id="PF04359">
    <property type="entry name" value="DUF493"/>
    <property type="match status" value="1"/>
</dbReference>
<dbReference type="SUPFAM" id="SSF117991">
    <property type="entry name" value="YbeD/HP0495-like"/>
    <property type="match status" value="1"/>
</dbReference>
<gene>
    <name type="ordered locus">Pmen_3793</name>
</gene>
<organism>
    <name type="scientific">Ectopseudomonas mendocina (strain ymp)</name>
    <name type="common">Pseudomonas mendocina</name>
    <dbReference type="NCBI Taxonomy" id="399739"/>
    <lineage>
        <taxon>Bacteria</taxon>
        <taxon>Pseudomonadati</taxon>
        <taxon>Pseudomonadota</taxon>
        <taxon>Gammaproteobacteria</taxon>
        <taxon>Pseudomonadales</taxon>
        <taxon>Pseudomonadaceae</taxon>
        <taxon>Ectopseudomonas</taxon>
    </lineage>
</organism>
<comment type="similarity">
    <text evidence="1">Belongs to the UPF0250 family.</text>
</comment>
<feature type="chain" id="PRO_1000061882" description="UPF0250 protein Pmen_3793">
    <location>
        <begin position="1"/>
        <end position="92"/>
    </location>
</feature>